<comment type="function">
    <text evidence="1">Myosin heavy chain that is required for the cell cycle-regulated transport of various organelles and proteins for their segregation. Functions by binding with its tail domain to receptor proteins on organelles and exerting force with its N-terminal motor domain against actin filaments, thereby transporting its cargo along polarized actin cables (By similarity).</text>
</comment>
<comment type="subunit">
    <text evidence="1">Homodimer. Interacts with calmodulin (CMD1) and the myosin light chain MLC1 through its IQ repeats (By similarity).</text>
</comment>
<comment type="similarity">
    <text evidence="6">Belongs to the TRAFAC class myosin-kinesin ATPase superfamily. Myosin family.</text>
</comment>
<feature type="chain" id="PRO_0000123487" description="Myosin-2B">
    <location>
        <begin position="1"/>
        <end position="1419"/>
    </location>
</feature>
<feature type="domain" description="Myosin N-terminal SH3-like" evidence="5">
    <location>
        <begin position="4"/>
        <end position="57"/>
    </location>
</feature>
<feature type="domain" description="Myosin motor" evidence="4">
    <location>
        <begin position="75"/>
        <end position="780"/>
    </location>
</feature>
<feature type="domain" description="IQ 1">
    <location>
        <begin position="783"/>
        <end position="805"/>
    </location>
</feature>
<feature type="domain" description="IQ 2">
    <location>
        <begin position="806"/>
        <end position="830"/>
    </location>
</feature>
<feature type="domain" description="IQ 3">
    <location>
        <begin position="831"/>
        <end position="854"/>
    </location>
</feature>
<feature type="domain" description="IQ 4">
    <location>
        <begin position="855"/>
        <end position="878"/>
    </location>
</feature>
<feature type="domain" description="IQ 5">
    <location>
        <begin position="879"/>
        <end position="901"/>
    </location>
</feature>
<feature type="domain" description="IQ 6">
    <location>
        <begin position="902"/>
        <end position="931"/>
    </location>
</feature>
<feature type="domain" description="Dilute" evidence="3">
    <location>
        <begin position="1143"/>
        <end position="1357"/>
    </location>
</feature>
<feature type="region of interest" description="Actin-binding" evidence="1">
    <location>
        <begin position="451"/>
        <end position="531"/>
    </location>
</feature>
<feature type="region of interest" description="Non alpha-helical, tail domain">
    <location>
        <begin position="1061"/>
        <end position="1419"/>
    </location>
</feature>
<feature type="coiled-coil region" evidence="2">
    <location>
        <begin position="909"/>
        <end position="940"/>
    </location>
</feature>
<feature type="binding site" evidence="2">
    <location>
        <begin position="169"/>
        <end position="176"/>
    </location>
    <ligand>
        <name>ATP</name>
        <dbReference type="ChEBI" id="CHEBI:30616"/>
    </ligand>
</feature>
<organism>
    <name type="scientific">Naumovozyma castellii</name>
    <name type="common">Yeast</name>
    <name type="synonym">Saccharomyces castellii</name>
    <dbReference type="NCBI Taxonomy" id="27288"/>
    <lineage>
        <taxon>Eukaryota</taxon>
        <taxon>Fungi</taxon>
        <taxon>Dikarya</taxon>
        <taxon>Ascomycota</taxon>
        <taxon>Saccharomycotina</taxon>
        <taxon>Saccharomycetes</taxon>
        <taxon>Saccharomycetales</taxon>
        <taxon>Saccharomycetaceae</taxon>
        <taxon>Naumovozyma</taxon>
    </lineage>
</organism>
<name>MYO2B_NAUCA</name>
<proteinExistence type="inferred from homology"/>
<dbReference type="EMBL" id="AACF01000111">
    <property type="status" value="NOT_ANNOTATED_CDS"/>
    <property type="molecule type" value="Genomic_DNA"/>
</dbReference>
<dbReference type="EMBL" id="HE576757">
    <property type="protein sequence ID" value="CCC70658.1"/>
    <property type="molecule type" value="Genomic_DNA"/>
</dbReference>
<dbReference type="EMBL" id="AY144941">
    <property type="protein sequence ID" value="AAO32504.1"/>
    <property type="molecule type" value="Genomic_DNA"/>
</dbReference>
<dbReference type="EMBL" id="AY144940">
    <property type="protein sequence ID" value="AAO32503.1"/>
    <property type="molecule type" value="Genomic_DNA"/>
</dbReference>
<dbReference type="SMR" id="Q875X4"/>
<dbReference type="STRING" id="1064592.Q875X4"/>
<dbReference type="KEGG" id="ncs:NCAS_0F01740"/>
<dbReference type="eggNOG" id="KOG0160">
    <property type="taxonomic scope" value="Eukaryota"/>
</dbReference>
<dbReference type="HOGENOM" id="CLU_000192_9_0_1"/>
<dbReference type="InParanoid" id="Q875X4"/>
<dbReference type="OMA" id="FEHFEQN"/>
<dbReference type="OrthoDB" id="6108017at2759"/>
<dbReference type="Proteomes" id="UP000001640">
    <property type="component" value="Chromosome 6"/>
</dbReference>
<dbReference type="GO" id="GO:0005934">
    <property type="term" value="C:cellular bud tip"/>
    <property type="evidence" value="ECO:0007669"/>
    <property type="project" value="EnsemblFungi"/>
</dbReference>
<dbReference type="GO" id="GO:0005737">
    <property type="term" value="C:cytoplasm"/>
    <property type="evidence" value="ECO:0007669"/>
    <property type="project" value="TreeGrafter"/>
</dbReference>
<dbReference type="GO" id="GO:0031941">
    <property type="term" value="C:filamentous actin"/>
    <property type="evidence" value="ECO:0007669"/>
    <property type="project" value="EnsemblFungi"/>
</dbReference>
<dbReference type="GO" id="GO:0016020">
    <property type="term" value="C:membrane"/>
    <property type="evidence" value="ECO:0007669"/>
    <property type="project" value="TreeGrafter"/>
</dbReference>
<dbReference type="GO" id="GO:0016459">
    <property type="term" value="C:myosin complex"/>
    <property type="evidence" value="ECO:0007669"/>
    <property type="project" value="UniProtKB-KW"/>
</dbReference>
<dbReference type="GO" id="GO:0051015">
    <property type="term" value="F:actin filament binding"/>
    <property type="evidence" value="ECO:0007669"/>
    <property type="project" value="EnsemblFungi"/>
</dbReference>
<dbReference type="GO" id="GO:0005524">
    <property type="term" value="F:ATP binding"/>
    <property type="evidence" value="ECO:0007669"/>
    <property type="project" value="UniProtKB-KW"/>
</dbReference>
<dbReference type="GO" id="GO:0000146">
    <property type="term" value="F:microfilament motor activity"/>
    <property type="evidence" value="ECO:0007669"/>
    <property type="project" value="EnsemblFungi"/>
</dbReference>
<dbReference type="GO" id="GO:0007015">
    <property type="term" value="P:actin filament organization"/>
    <property type="evidence" value="ECO:0007669"/>
    <property type="project" value="TreeGrafter"/>
</dbReference>
<dbReference type="GO" id="GO:0048309">
    <property type="term" value="P:endoplasmic reticulum inheritance"/>
    <property type="evidence" value="ECO:0007669"/>
    <property type="project" value="EnsemblFungi"/>
</dbReference>
<dbReference type="GO" id="GO:0008298">
    <property type="term" value="P:intracellular mRNA localization"/>
    <property type="evidence" value="ECO:0007669"/>
    <property type="project" value="EnsemblFungi"/>
</dbReference>
<dbReference type="GO" id="GO:0007533">
    <property type="term" value="P:mating type switching"/>
    <property type="evidence" value="ECO:0007669"/>
    <property type="project" value="EnsemblFungi"/>
</dbReference>
<dbReference type="GO" id="GO:0015031">
    <property type="term" value="P:protein transport"/>
    <property type="evidence" value="ECO:0007669"/>
    <property type="project" value="UniProtKB-KW"/>
</dbReference>
<dbReference type="CDD" id="cd01380">
    <property type="entry name" value="MYSc_Myo5"/>
    <property type="match status" value="1"/>
</dbReference>
<dbReference type="FunFam" id="1.10.10.820:FF:000001">
    <property type="entry name" value="Myosin heavy chain"/>
    <property type="match status" value="1"/>
</dbReference>
<dbReference type="Gene3D" id="1.10.10.820">
    <property type="match status" value="1"/>
</dbReference>
<dbReference type="Gene3D" id="1.20.5.190">
    <property type="match status" value="2"/>
</dbReference>
<dbReference type="Gene3D" id="1.20.58.530">
    <property type="match status" value="1"/>
</dbReference>
<dbReference type="Gene3D" id="6.20.240.20">
    <property type="match status" value="1"/>
</dbReference>
<dbReference type="Gene3D" id="3.40.850.10">
    <property type="entry name" value="Kinesin motor domain"/>
    <property type="match status" value="1"/>
</dbReference>
<dbReference type="Gene3D" id="1.20.120.720">
    <property type="entry name" value="Myosin VI head, motor domain, U50 subdomain"/>
    <property type="match status" value="1"/>
</dbReference>
<dbReference type="InterPro" id="IPR002710">
    <property type="entry name" value="Dilute_dom"/>
</dbReference>
<dbReference type="InterPro" id="IPR036961">
    <property type="entry name" value="Kinesin_motor_dom_sf"/>
</dbReference>
<dbReference type="InterPro" id="IPR001609">
    <property type="entry name" value="Myosin_head_motor_dom-like"/>
</dbReference>
<dbReference type="InterPro" id="IPR004009">
    <property type="entry name" value="Myosin_N"/>
</dbReference>
<dbReference type="InterPro" id="IPR036103">
    <property type="entry name" value="MYSc_Myo5"/>
</dbReference>
<dbReference type="InterPro" id="IPR027417">
    <property type="entry name" value="P-loop_NTPase"/>
</dbReference>
<dbReference type="PANTHER" id="PTHR13140:SF706">
    <property type="entry name" value="DILUTE CLASS UNCONVENTIONAL MYOSIN, ISOFORM C"/>
    <property type="match status" value="1"/>
</dbReference>
<dbReference type="PANTHER" id="PTHR13140">
    <property type="entry name" value="MYOSIN"/>
    <property type="match status" value="1"/>
</dbReference>
<dbReference type="Pfam" id="PF01843">
    <property type="entry name" value="DIL"/>
    <property type="match status" value="1"/>
</dbReference>
<dbReference type="Pfam" id="PF00063">
    <property type="entry name" value="Myosin_head"/>
    <property type="match status" value="1"/>
</dbReference>
<dbReference type="PRINTS" id="PR00193">
    <property type="entry name" value="MYOSINHEAVY"/>
</dbReference>
<dbReference type="SMART" id="SM01132">
    <property type="entry name" value="DIL"/>
    <property type="match status" value="1"/>
</dbReference>
<dbReference type="SMART" id="SM00242">
    <property type="entry name" value="MYSc"/>
    <property type="match status" value="1"/>
</dbReference>
<dbReference type="SUPFAM" id="SSF50084">
    <property type="entry name" value="Myosin S1 fragment, N-terminal domain"/>
    <property type="match status" value="1"/>
</dbReference>
<dbReference type="SUPFAM" id="SSF52540">
    <property type="entry name" value="P-loop containing nucleoside triphosphate hydrolases"/>
    <property type="match status" value="2"/>
</dbReference>
<dbReference type="PROSITE" id="PS51126">
    <property type="entry name" value="DILUTE"/>
    <property type="match status" value="1"/>
</dbReference>
<dbReference type="PROSITE" id="PS51456">
    <property type="entry name" value="MYOSIN_MOTOR"/>
    <property type="match status" value="1"/>
</dbReference>
<dbReference type="PROSITE" id="PS51844">
    <property type="entry name" value="SH3_LIKE"/>
    <property type="match status" value="1"/>
</dbReference>
<protein>
    <recommendedName>
        <fullName>Myosin-2B</fullName>
    </recommendedName>
    <alternativeName>
        <fullName>Class V unconventional myosin MYO2B</fullName>
    </alternativeName>
    <alternativeName>
        <fullName>Type V myosin heavy chain MYO2B</fullName>
        <shortName>Myosin V MYO2B</shortName>
    </alternativeName>
</protein>
<sequence length="1419" mass="162600">MSFEVGTRCWYPNSEAGWIGCEVTKNDFQDGTYHIELTSETGLVIPIETKHLESNNAMENNHEFLPVLRNPPILEATHDLTTLSYLNEPAVLHAIKERYNQRNIYTYSGIVLIATNPFDKVEELYSSEMIQAYARKNRDEMAPHIFAIAEEAYREMINNDQNQTIIVSGESGAGKTVSAKYIMRFFASVEEEHFNKEGDSKHQEEMSDIEVKILATNPVMEAFGNAKTTRNDNSSRFGKYLQILFDSNKNIIGSSIKTYLLERSRLVFQPTSERNYHIFYQMLSGLSSDMKKQLYLTNAEDFFYLNQGGESTINGIDDSLEYSTTIESLSTVGIDTEVQLQIFKILAALLHIGNIEIKKTRTDATLSSTDPSLQKACELLGLDPLTFSKWITKKQINTRSEKIISNLSFNQALVARDSVAKFIYSSLFDWLVGNINNVLCTSQVSETINSFIGVLDIYGFEHFEQNSFEQFCINYANEKLQQEFNHHVFKLEQEEYVKEEIEWSFIEFSDNQPCIDLIENKLGILSLLDEESRLPAGSDESWTTKLYQTFNKPPSNTVFGKPRFGQNKFIISHYAVDVTYEVDGFIEKNKDTISESQLEVLKATTNPTLATIFEFSEAENKTNITEQAGTIQRKTINRKPTLGSIFKRSLVELMETINSTNVHYIRCIKPNTEKEAWKFDNLMVLSQLRACGVLETIKISCAGFPSRWAFEEFIQRYYLLAPTDQWGRVTADMEMSLEDMVAFCDLILSEKIDSKDKYQIGKTKIFFKAGVLAYLEKIRSDKVTELAVLIQKHIRAKYYRSLYLQAMLSIKNCQSLIRGVQSRQRVDFEMKTDAATLLQTLHRSTRVRSQVFETLKNILEVQTAIRRVLVSNFIQREFESRSAIMIQSKIRANSPKHRYQTLKTGTILIQALVRRKQSQEKLKQLKIQAESAASLKNSAAGIQKELIGFIEELISNIKENDAKTTEYKSLLKHTSLPVVTGTNERTAAYISTKNQVEEDKVTIRTILTKYETLKDLCRKELKSLESLEKGVNDEKFASSLQSSLELIKRDISDLRINAIEKDNERTSTSSELKDGTDCTDNAVVQILTKRQGDLINDLVNVVFLEFQIPQRGRTKDCEHFYPVKLLISIVNLMNKFGLRKSSHSILKQTVQDLIGKISSMDAKKCVTFGLYWIISLHKLSSLPQEPAVLNKLQDKFYKTWLKQCFNQMKTVDSILILFDTISEFTLFFQGTTELLTNIITALLQHINAKWFNDLLIKQNTLSWTHGLEKDSEIKKVLDWCNSHKIRNSTEYLRNVNQACKLLQLRISNISDFQLVCEFCYDLSSLQMHALLTKYRPTQFEKPIPVDVLNHLSNTARRERTTMKRELTLDAGTETYSVENLFQGHPIEASDEHDDINQLINQLPSDKDFPVIKELGSLLA</sequence>
<evidence type="ECO:0000250" key="1"/>
<evidence type="ECO:0000255" key="2"/>
<evidence type="ECO:0000255" key="3">
    <source>
        <dbReference type="PROSITE-ProRule" id="PRU00503"/>
    </source>
</evidence>
<evidence type="ECO:0000255" key="4">
    <source>
        <dbReference type="PROSITE-ProRule" id="PRU00782"/>
    </source>
</evidence>
<evidence type="ECO:0000255" key="5">
    <source>
        <dbReference type="PROSITE-ProRule" id="PRU01190"/>
    </source>
</evidence>
<evidence type="ECO:0000305" key="6"/>
<accession>Q875X4</accession>
<accession>G0VGN7</accession>
<accession>Q875X5</accession>
<keyword id="KW-0009">Actin-binding</keyword>
<keyword id="KW-0067">ATP-binding</keyword>
<keyword id="KW-0131">Cell cycle</keyword>
<keyword id="KW-0175">Coiled coil</keyword>
<keyword id="KW-0505">Motor protein</keyword>
<keyword id="KW-0518">Myosin</keyword>
<keyword id="KW-0547">Nucleotide-binding</keyword>
<keyword id="KW-0653">Protein transport</keyword>
<keyword id="KW-1185">Reference proteome</keyword>
<keyword id="KW-0677">Repeat</keyword>
<keyword id="KW-0813">Transport</keyword>
<reference key="1">
    <citation type="journal article" date="2003" name="Science">
        <title>Finding functional features in Saccharomyces genomes by phylogenetic footprinting.</title>
        <authorList>
            <person name="Cliften P.F."/>
            <person name="Sudarsanam P."/>
            <person name="Desikan A."/>
            <person name="Fulton L."/>
            <person name="Fulton B."/>
            <person name="Majors J."/>
            <person name="Waterston R."/>
            <person name="Cohen B.A."/>
            <person name="Johnston M."/>
        </authorList>
    </citation>
    <scope>NUCLEOTIDE SEQUENCE [GENOMIC DNA]</scope>
    <source>
        <strain>ATCC 76901 / BCRC 22586 / CBS 4309 / NBRC 1992 / NRRL Y-12630</strain>
    </source>
</reference>
<reference key="2">
    <citation type="submission" date="2011-07" db="EMBL/GenBank/DDBJ databases">
        <title>Genome sequence of Naumovozyma castellii.</title>
        <authorList>
            <person name="Gordon J.L."/>
            <person name="Armisen D."/>
            <person name="Proux-Wera E."/>
            <person name="OhEigeartaigh S.S."/>
            <person name="Byrne K.P."/>
            <person name="Wolfe K.H."/>
        </authorList>
    </citation>
    <scope>NUCLEOTIDE SEQUENCE [LARGE SCALE GENOMIC DNA]</scope>
    <source>
        <strain>ATCC 76901 / BCRC 22586 / CBS 4309 / NBRC 1992 / NRRL Y-12630</strain>
    </source>
</reference>
<reference key="3">
    <citation type="journal article" date="2003" name="Nature">
        <title>Yeast genome duplication was followed by asynchronous differentiation of duplicated genes.</title>
        <authorList>
            <person name="Langkjaer R.B."/>
            <person name="Cliften P.F."/>
            <person name="Johnston M."/>
            <person name="Piskur J."/>
        </authorList>
    </citation>
    <scope>NUCLEOTIDE SEQUENCE [GENOMIC DNA] OF 1-361 AND 373-1419</scope>
    <source>
        <strain>ATCC 76901 / BCRC 22586 / CBS 4309 / NBRC 1992 / NRRL Y-12630</strain>
    </source>
</reference>
<gene>
    <name type="primary">MYO2B</name>
    <name type="ordered locus">NCAS_0F01740</name>
</gene>